<gene>
    <name evidence="3" type="primary">MCPH1</name>
</gene>
<sequence length="835" mass="92584">MAAPILKDVVAYVEVWSSNGTENYSKTFTTQLVEMGAKVSKTFNKQVTHVIFKDGYQSTWDKAQKRGVKLVSVLWVEKCRTAGAHIDESLFPAANTNEHLPSLIKKKRKCMQPKDFNFKTPENDKRFQKKFEKMAKELQRQKTNLDDDVPILLFESNGSLIYTPTIEINSSHHSAMEKRLQEMKEKRENLSPTSSQMIQQSHDNPSNSLCEAPLNISRDTLCSDECFAGGLHSSFDDLCGNSGCGNQERKLEGSINDIKSDVCISSLVLKANNIHSSPSFTHLDKSSPQKFLSNLSKEEINLQRNIAGKIVTPDQKQAAGVSQETFEEKYRLSPTLSSTKGHLLIHSRPRSSSVKRKRVSHGSHSPPKEKCKRKRSIRRSIMPRLQLCRSEGRLQHVAGPALEALSCGESSYDDYFSPDNLKERNSENLPPESQLPSSPAQFSCRSLSKKERTSIFEMSDFSCVGKKTRTVDITNFTAKTISSPQKTGNGEGRATSSCVTSAPEEALRCCGQAGKEDACPEGNGFSYTIEDPALPKGHDDDLTPLEGSLEEMKEAVDLKSTQNKGTTSKISNSSEGEAQSEHEPCFIVDCNMETSTEEKENLPGGYSGSVKNRPTRHDVLDDSCDGFKDLIKPHEELKKSGRGKKPTRTLVMTSMPSEKQNVVIQVVDKLKGFSIAPDVCETTTHVLSGKPLRTLNVLLGIARGCWVLSYDWVLWSLELGHWISEEPFELSHHFPAAPLCRSECHLSAGPYRGTLFADQPVMFVSPASSPPVAKLCELVHLCGGRVSQVPRQASIVIGPYSGKKKATVKYLSEKWVLDSITQHKVCASENYLLSQ</sequence>
<evidence type="ECO:0000250" key="1"/>
<evidence type="ECO:0000250" key="2">
    <source>
        <dbReference type="UniProtKB" id="Q7TT79"/>
    </source>
</evidence>
<evidence type="ECO:0000250" key="3">
    <source>
        <dbReference type="UniProtKB" id="Q8NEM0"/>
    </source>
</evidence>
<evidence type="ECO:0000255" key="4">
    <source>
        <dbReference type="PROSITE-ProRule" id="PRU00033"/>
    </source>
</evidence>
<evidence type="ECO:0000256" key="5">
    <source>
        <dbReference type="SAM" id="MobiDB-lite"/>
    </source>
</evidence>
<dbReference type="EMBL" id="AY552995">
    <property type="protein sequence ID" value="AAS91378.1"/>
    <property type="molecule type" value="Genomic_DNA"/>
</dbReference>
<dbReference type="EMBL" id="AY552982">
    <property type="protein sequence ID" value="AAS91378.1"/>
    <property type="status" value="JOINED"/>
    <property type="molecule type" value="Genomic_DNA"/>
</dbReference>
<dbReference type="EMBL" id="AY552983">
    <property type="protein sequence ID" value="AAS91378.1"/>
    <property type="status" value="JOINED"/>
    <property type="molecule type" value="Genomic_DNA"/>
</dbReference>
<dbReference type="EMBL" id="AY552984">
    <property type="protein sequence ID" value="AAS91378.1"/>
    <property type="status" value="JOINED"/>
    <property type="molecule type" value="Genomic_DNA"/>
</dbReference>
<dbReference type="EMBL" id="AY552985">
    <property type="protein sequence ID" value="AAS91378.1"/>
    <property type="status" value="JOINED"/>
    <property type="molecule type" value="Genomic_DNA"/>
</dbReference>
<dbReference type="EMBL" id="AY552986">
    <property type="protein sequence ID" value="AAS91378.1"/>
    <property type="status" value="JOINED"/>
    <property type="molecule type" value="Genomic_DNA"/>
</dbReference>
<dbReference type="EMBL" id="AY552987">
    <property type="protein sequence ID" value="AAS91378.1"/>
    <property type="status" value="JOINED"/>
    <property type="molecule type" value="Genomic_DNA"/>
</dbReference>
<dbReference type="EMBL" id="AY552988">
    <property type="protein sequence ID" value="AAS91378.1"/>
    <property type="status" value="JOINED"/>
    <property type="molecule type" value="Genomic_DNA"/>
</dbReference>
<dbReference type="EMBL" id="AY552989">
    <property type="protein sequence ID" value="AAS91378.1"/>
    <property type="status" value="JOINED"/>
    <property type="molecule type" value="Genomic_DNA"/>
</dbReference>
<dbReference type="EMBL" id="AY552990">
    <property type="protein sequence ID" value="AAS91378.1"/>
    <property type="status" value="JOINED"/>
    <property type="molecule type" value="Genomic_DNA"/>
</dbReference>
<dbReference type="EMBL" id="AY552991">
    <property type="protein sequence ID" value="AAS91378.1"/>
    <property type="status" value="JOINED"/>
    <property type="molecule type" value="Genomic_DNA"/>
</dbReference>
<dbReference type="EMBL" id="AY552992">
    <property type="protein sequence ID" value="AAS91378.1"/>
    <property type="status" value="JOINED"/>
    <property type="molecule type" value="Genomic_DNA"/>
</dbReference>
<dbReference type="EMBL" id="AY552993">
    <property type="protein sequence ID" value="AAS91378.1"/>
    <property type="status" value="JOINED"/>
    <property type="molecule type" value="Genomic_DNA"/>
</dbReference>
<dbReference type="EMBL" id="AY552994">
    <property type="protein sequence ID" value="AAS91378.1"/>
    <property type="status" value="JOINED"/>
    <property type="molecule type" value="Genomic_DNA"/>
</dbReference>
<dbReference type="RefSeq" id="NP_001009010.3">
    <property type="nucleotide sequence ID" value="NM_001009010.3"/>
</dbReference>
<dbReference type="SMR" id="P61593"/>
<dbReference type="FunCoup" id="P61593">
    <property type="interactions" value="2414"/>
</dbReference>
<dbReference type="STRING" id="9598.ENSPTRP00000093442"/>
<dbReference type="PaxDb" id="9598-ENSPTRP00000034175"/>
<dbReference type="GeneID" id="449589"/>
<dbReference type="KEGG" id="ptr:449589"/>
<dbReference type="CTD" id="79648"/>
<dbReference type="eggNOG" id="KOG4362">
    <property type="taxonomic scope" value="Eukaryota"/>
</dbReference>
<dbReference type="InParanoid" id="P61593"/>
<dbReference type="Proteomes" id="UP000002277">
    <property type="component" value="Unplaced"/>
</dbReference>
<dbReference type="GO" id="GO:0005813">
    <property type="term" value="C:centrosome"/>
    <property type="evidence" value="ECO:0007669"/>
    <property type="project" value="UniProtKB-SubCell"/>
</dbReference>
<dbReference type="GO" id="GO:0005737">
    <property type="term" value="C:cytoplasm"/>
    <property type="evidence" value="ECO:0007669"/>
    <property type="project" value="UniProtKB-KW"/>
</dbReference>
<dbReference type="GO" id="GO:0021987">
    <property type="term" value="P:cerebral cortex development"/>
    <property type="evidence" value="ECO:0007669"/>
    <property type="project" value="InterPro"/>
</dbReference>
<dbReference type="GO" id="GO:0000278">
    <property type="term" value="P:mitotic cell cycle"/>
    <property type="evidence" value="ECO:0000318"/>
    <property type="project" value="GO_Central"/>
</dbReference>
<dbReference type="CDD" id="cd17716">
    <property type="entry name" value="BRCT_microcephalin_rpt1"/>
    <property type="match status" value="1"/>
</dbReference>
<dbReference type="CDD" id="cd17736">
    <property type="entry name" value="BRCT_microcephalin_rpt2"/>
    <property type="match status" value="1"/>
</dbReference>
<dbReference type="CDD" id="cd17751">
    <property type="entry name" value="BRCT_microcephalin_rpt3"/>
    <property type="match status" value="1"/>
</dbReference>
<dbReference type="FunFam" id="3.40.50.10190:FF:000047">
    <property type="entry name" value="Microcephalin"/>
    <property type="match status" value="1"/>
</dbReference>
<dbReference type="FunFam" id="3.40.50.10190:FF:000053">
    <property type="entry name" value="Microcephalin"/>
    <property type="match status" value="1"/>
</dbReference>
<dbReference type="FunFam" id="3.40.50.10190:FF:000055">
    <property type="entry name" value="Microcephalin"/>
    <property type="match status" value="1"/>
</dbReference>
<dbReference type="Gene3D" id="3.40.50.10190">
    <property type="entry name" value="BRCT domain"/>
    <property type="match status" value="3"/>
</dbReference>
<dbReference type="InterPro" id="IPR001357">
    <property type="entry name" value="BRCT_dom"/>
</dbReference>
<dbReference type="InterPro" id="IPR036420">
    <property type="entry name" value="BRCT_dom_sf"/>
</dbReference>
<dbReference type="InterPro" id="IPR022047">
    <property type="entry name" value="Microcephalin-like"/>
</dbReference>
<dbReference type="InterPro" id="IPR029504">
    <property type="entry name" value="Microcephalin_mammal"/>
</dbReference>
<dbReference type="PANTHER" id="PTHR14625">
    <property type="entry name" value="MICROCEPHALIN"/>
    <property type="match status" value="1"/>
</dbReference>
<dbReference type="PANTHER" id="PTHR14625:SF3">
    <property type="entry name" value="MICROCEPHALIN"/>
    <property type="match status" value="1"/>
</dbReference>
<dbReference type="Pfam" id="PF12258">
    <property type="entry name" value="Microcephalin"/>
    <property type="match status" value="1"/>
</dbReference>
<dbReference type="Pfam" id="PF12738">
    <property type="entry name" value="PTCB-BRCT"/>
    <property type="match status" value="1"/>
</dbReference>
<dbReference type="SMART" id="SM00292">
    <property type="entry name" value="BRCT"/>
    <property type="match status" value="3"/>
</dbReference>
<dbReference type="SUPFAM" id="SSF52113">
    <property type="entry name" value="BRCT domain"/>
    <property type="match status" value="3"/>
</dbReference>
<dbReference type="PROSITE" id="PS50172">
    <property type="entry name" value="BRCT"/>
    <property type="match status" value="3"/>
</dbReference>
<proteinExistence type="inferred from homology"/>
<organism>
    <name type="scientific">Pan troglodytes</name>
    <name type="common">Chimpanzee</name>
    <dbReference type="NCBI Taxonomy" id="9598"/>
    <lineage>
        <taxon>Eukaryota</taxon>
        <taxon>Metazoa</taxon>
        <taxon>Chordata</taxon>
        <taxon>Craniata</taxon>
        <taxon>Vertebrata</taxon>
        <taxon>Euteleostomi</taxon>
        <taxon>Mammalia</taxon>
        <taxon>Eutheria</taxon>
        <taxon>Euarchontoglires</taxon>
        <taxon>Primates</taxon>
        <taxon>Haplorrhini</taxon>
        <taxon>Catarrhini</taxon>
        <taxon>Hominidae</taxon>
        <taxon>Pan</taxon>
    </lineage>
</organism>
<protein>
    <recommendedName>
        <fullName evidence="3">Microcephalin</fullName>
    </recommendedName>
</protein>
<reference key="1">
    <citation type="journal article" date="2004" name="Hum. Mol. Genet.">
        <title>Reconstructing the evolutionary history of microcephalin, a gene controlling human brain size.</title>
        <authorList>
            <person name="Evans P.D."/>
            <person name="Anderson J.R."/>
            <person name="Vallender E.J."/>
            <person name="Choi S.S."/>
            <person name="Lahn B.T."/>
        </authorList>
    </citation>
    <scope>NUCLEOTIDE SEQUENCE [GENOMIC DNA]</scope>
</reference>
<name>MCPH1_PANTR</name>
<feature type="chain" id="PRO_0000096300" description="Microcephalin">
    <location>
        <begin position="1"/>
        <end position="835"/>
    </location>
</feature>
<feature type="domain" description="BRCT 1" evidence="4">
    <location>
        <begin position="1"/>
        <end position="93"/>
    </location>
</feature>
<feature type="domain" description="BRCT 2" evidence="4">
    <location>
        <begin position="640"/>
        <end position="730"/>
    </location>
</feature>
<feature type="domain" description="BRCT 3" evidence="4">
    <location>
        <begin position="751"/>
        <end position="833"/>
    </location>
</feature>
<feature type="region of interest" description="Disordered" evidence="5">
    <location>
        <begin position="332"/>
        <end position="376"/>
    </location>
</feature>
<feature type="region of interest" description="Disordered" evidence="5">
    <location>
        <begin position="417"/>
        <end position="442"/>
    </location>
</feature>
<feature type="region of interest" description="Disordered" evidence="5">
    <location>
        <begin position="555"/>
        <end position="583"/>
    </location>
</feature>
<feature type="compositionally biased region" description="Basic residues" evidence="5">
    <location>
        <begin position="343"/>
        <end position="361"/>
    </location>
</feature>
<feature type="compositionally biased region" description="Polar residues" evidence="5">
    <location>
        <begin position="559"/>
        <end position="577"/>
    </location>
</feature>
<feature type="modified residue" description="Phosphoserine" evidence="3">
    <location>
        <position position="279"/>
    </location>
</feature>
<feature type="modified residue" description="Phosphoserine" evidence="3">
    <location>
        <position position="287"/>
    </location>
</feature>
<feature type="modified residue" description="Phosphoserine" evidence="2">
    <location>
        <position position="296"/>
    </location>
</feature>
<feature type="modified residue" description="Phosphoserine" evidence="3">
    <location>
        <position position="333"/>
    </location>
</feature>
<feature type="modified residue" description="Phosphothreonine" evidence="3">
    <location>
        <position position="335"/>
    </location>
</feature>
<feature type="modified residue" description="Phosphoserine" evidence="3">
    <location>
        <position position="548"/>
    </location>
</feature>
<accession>P61593</accession>
<keyword id="KW-0963">Cytoplasm</keyword>
<keyword id="KW-0206">Cytoskeleton</keyword>
<keyword id="KW-0597">Phosphoprotein</keyword>
<keyword id="KW-1185">Reference proteome</keyword>
<keyword id="KW-0677">Repeat</keyword>
<comment type="function">
    <text evidence="1">Implicated in chromosome condensation and DNA damage induced cellular responses. May play a role in neurogenesis and regulation of the size of the cerebral cortex (By similarity).</text>
</comment>
<comment type="subunit">
    <text evidence="1">Interacts with CDC27 and maybe other components of the APC/C complex. Interacts with histone variant H2AX under DNA damage conditions (By similarity).</text>
</comment>
<comment type="subcellular location">
    <subcellularLocation>
        <location evidence="1">Cytoplasm</location>
        <location evidence="1">Cytoskeleton</location>
        <location evidence="1">Microtubule organizing center</location>
        <location evidence="1">Centrosome</location>
    </subcellularLocation>
</comment>
<comment type="domain">
    <text evidence="1">BRCT domain 1 is required to prevent abnormal chromosome condensation. It binds directly to the SWI-SNF chromatin remodeling complex (By similarity).</text>
</comment>
<comment type="domain">
    <text evidence="1">BRCT domains 2 and 3 recognize phosphoserine/phosphothreonine marks on proteins with high selectivity, and mediate interaction with phosphorylated CDC27. They also mediate the dual recognition of phosphoserine and phosphotyrosine in the C-terminal tail of histone H2AX (By similarity).</text>
</comment>